<name>SYH_MARMS</name>
<organism>
    <name type="scientific">Marinomonas sp. (strain MWYL1)</name>
    <dbReference type="NCBI Taxonomy" id="400668"/>
    <lineage>
        <taxon>Bacteria</taxon>
        <taxon>Pseudomonadati</taxon>
        <taxon>Pseudomonadota</taxon>
        <taxon>Gammaproteobacteria</taxon>
        <taxon>Oceanospirillales</taxon>
        <taxon>Oceanospirillaceae</taxon>
        <taxon>Marinomonas</taxon>
    </lineage>
</organism>
<keyword id="KW-0030">Aminoacyl-tRNA synthetase</keyword>
<keyword id="KW-0067">ATP-binding</keyword>
<keyword id="KW-0963">Cytoplasm</keyword>
<keyword id="KW-0436">Ligase</keyword>
<keyword id="KW-0547">Nucleotide-binding</keyword>
<keyword id="KW-0648">Protein biosynthesis</keyword>
<dbReference type="EC" id="6.1.1.21" evidence="1"/>
<dbReference type="EMBL" id="CP000749">
    <property type="protein sequence ID" value="ABR70286.1"/>
    <property type="molecule type" value="Genomic_DNA"/>
</dbReference>
<dbReference type="SMR" id="A6VV07"/>
<dbReference type="STRING" id="400668.Mmwyl1_1357"/>
<dbReference type="KEGG" id="mmw:Mmwyl1_1357"/>
<dbReference type="eggNOG" id="COG0124">
    <property type="taxonomic scope" value="Bacteria"/>
</dbReference>
<dbReference type="HOGENOM" id="CLU_025113_1_1_6"/>
<dbReference type="OrthoDB" id="9800814at2"/>
<dbReference type="GO" id="GO:0005737">
    <property type="term" value="C:cytoplasm"/>
    <property type="evidence" value="ECO:0007669"/>
    <property type="project" value="UniProtKB-SubCell"/>
</dbReference>
<dbReference type="GO" id="GO:0005524">
    <property type="term" value="F:ATP binding"/>
    <property type="evidence" value="ECO:0007669"/>
    <property type="project" value="UniProtKB-UniRule"/>
</dbReference>
<dbReference type="GO" id="GO:0004821">
    <property type="term" value="F:histidine-tRNA ligase activity"/>
    <property type="evidence" value="ECO:0007669"/>
    <property type="project" value="UniProtKB-UniRule"/>
</dbReference>
<dbReference type="GO" id="GO:0006427">
    <property type="term" value="P:histidyl-tRNA aminoacylation"/>
    <property type="evidence" value="ECO:0007669"/>
    <property type="project" value="UniProtKB-UniRule"/>
</dbReference>
<dbReference type="CDD" id="cd00773">
    <property type="entry name" value="HisRS-like_core"/>
    <property type="match status" value="1"/>
</dbReference>
<dbReference type="CDD" id="cd00859">
    <property type="entry name" value="HisRS_anticodon"/>
    <property type="match status" value="1"/>
</dbReference>
<dbReference type="FunFam" id="3.30.930.10:FF:000005">
    <property type="entry name" value="Histidine--tRNA ligase"/>
    <property type="match status" value="1"/>
</dbReference>
<dbReference type="Gene3D" id="3.40.50.800">
    <property type="entry name" value="Anticodon-binding domain"/>
    <property type="match status" value="1"/>
</dbReference>
<dbReference type="Gene3D" id="3.30.930.10">
    <property type="entry name" value="Bira Bifunctional Protein, Domain 2"/>
    <property type="match status" value="1"/>
</dbReference>
<dbReference type="HAMAP" id="MF_00127">
    <property type="entry name" value="His_tRNA_synth"/>
    <property type="match status" value="1"/>
</dbReference>
<dbReference type="InterPro" id="IPR006195">
    <property type="entry name" value="aa-tRNA-synth_II"/>
</dbReference>
<dbReference type="InterPro" id="IPR045864">
    <property type="entry name" value="aa-tRNA-synth_II/BPL/LPL"/>
</dbReference>
<dbReference type="InterPro" id="IPR004154">
    <property type="entry name" value="Anticodon-bd"/>
</dbReference>
<dbReference type="InterPro" id="IPR036621">
    <property type="entry name" value="Anticodon-bd_dom_sf"/>
</dbReference>
<dbReference type="InterPro" id="IPR015807">
    <property type="entry name" value="His-tRNA-ligase"/>
</dbReference>
<dbReference type="InterPro" id="IPR041715">
    <property type="entry name" value="HisRS-like_core"/>
</dbReference>
<dbReference type="InterPro" id="IPR004516">
    <property type="entry name" value="HisRS/HisZ"/>
</dbReference>
<dbReference type="InterPro" id="IPR033656">
    <property type="entry name" value="HisRS_anticodon"/>
</dbReference>
<dbReference type="NCBIfam" id="TIGR00442">
    <property type="entry name" value="hisS"/>
    <property type="match status" value="1"/>
</dbReference>
<dbReference type="PANTHER" id="PTHR43707:SF1">
    <property type="entry name" value="HISTIDINE--TRNA LIGASE, MITOCHONDRIAL-RELATED"/>
    <property type="match status" value="1"/>
</dbReference>
<dbReference type="PANTHER" id="PTHR43707">
    <property type="entry name" value="HISTIDYL-TRNA SYNTHETASE"/>
    <property type="match status" value="1"/>
</dbReference>
<dbReference type="Pfam" id="PF03129">
    <property type="entry name" value="HGTP_anticodon"/>
    <property type="match status" value="1"/>
</dbReference>
<dbReference type="Pfam" id="PF13393">
    <property type="entry name" value="tRNA-synt_His"/>
    <property type="match status" value="1"/>
</dbReference>
<dbReference type="PIRSF" id="PIRSF001549">
    <property type="entry name" value="His-tRNA_synth"/>
    <property type="match status" value="1"/>
</dbReference>
<dbReference type="SUPFAM" id="SSF52954">
    <property type="entry name" value="Class II aaRS ABD-related"/>
    <property type="match status" value="1"/>
</dbReference>
<dbReference type="SUPFAM" id="SSF55681">
    <property type="entry name" value="Class II aaRS and biotin synthetases"/>
    <property type="match status" value="1"/>
</dbReference>
<dbReference type="PROSITE" id="PS50862">
    <property type="entry name" value="AA_TRNA_LIGASE_II"/>
    <property type="match status" value="1"/>
</dbReference>
<reference key="1">
    <citation type="submission" date="2007-06" db="EMBL/GenBank/DDBJ databases">
        <title>Complete sequence of Marinomonas sp. MWYL1.</title>
        <authorList>
            <consortium name="US DOE Joint Genome Institute"/>
            <person name="Copeland A."/>
            <person name="Lucas S."/>
            <person name="Lapidus A."/>
            <person name="Barry K."/>
            <person name="Glavina del Rio T."/>
            <person name="Dalin E."/>
            <person name="Tice H."/>
            <person name="Pitluck S."/>
            <person name="Kiss H."/>
            <person name="Brettin T."/>
            <person name="Bruce D."/>
            <person name="Detter J.C."/>
            <person name="Han C."/>
            <person name="Schmutz J."/>
            <person name="Larimer F."/>
            <person name="Land M."/>
            <person name="Hauser L."/>
            <person name="Kyrpides N."/>
            <person name="Kim E."/>
            <person name="Johnston A.W.B."/>
            <person name="Todd J.D."/>
            <person name="Rogers R."/>
            <person name="Wexler M."/>
            <person name="Bond P.L."/>
            <person name="Li Y."/>
            <person name="Richardson P."/>
        </authorList>
    </citation>
    <scope>NUCLEOTIDE SEQUENCE [LARGE SCALE GENOMIC DNA]</scope>
    <source>
        <strain>MWYL1</strain>
    </source>
</reference>
<accession>A6VV07</accession>
<gene>
    <name evidence="1" type="primary">hisS</name>
    <name type="ordered locus">Mmwyl1_1357</name>
</gene>
<protein>
    <recommendedName>
        <fullName evidence="1">Histidine--tRNA ligase</fullName>
        <ecNumber evidence="1">6.1.1.21</ecNumber>
    </recommendedName>
    <alternativeName>
        <fullName evidence="1">Histidyl-tRNA synthetase</fullName>
        <shortName evidence="1">HisRS</shortName>
    </alternativeName>
</protein>
<evidence type="ECO:0000255" key="1">
    <source>
        <dbReference type="HAMAP-Rule" id="MF_00127"/>
    </source>
</evidence>
<proteinExistence type="inferred from homology"/>
<feature type="chain" id="PRO_1000076276" description="Histidine--tRNA ligase">
    <location>
        <begin position="1"/>
        <end position="424"/>
    </location>
</feature>
<comment type="catalytic activity">
    <reaction evidence="1">
        <text>tRNA(His) + L-histidine + ATP = L-histidyl-tRNA(His) + AMP + diphosphate + H(+)</text>
        <dbReference type="Rhea" id="RHEA:17313"/>
        <dbReference type="Rhea" id="RHEA-COMP:9665"/>
        <dbReference type="Rhea" id="RHEA-COMP:9689"/>
        <dbReference type="ChEBI" id="CHEBI:15378"/>
        <dbReference type="ChEBI" id="CHEBI:30616"/>
        <dbReference type="ChEBI" id="CHEBI:33019"/>
        <dbReference type="ChEBI" id="CHEBI:57595"/>
        <dbReference type="ChEBI" id="CHEBI:78442"/>
        <dbReference type="ChEBI" id="CHEBI:78527"/>
        <dbReference type="ChEBI" id="CHEBI:456215"/>
        <dbReference type="EC" id="6.1.1.21"/>
    </reaction>
</comment>
<comment type="subunit">
    <text evidence="1">Homodimer.</text>
</comment>
<comment type="subcellular location">
    <subcellularLocation>
        <location evidence="1">Cytoplasm</location>
    </subcellularLocation>
</comment>
<comment type="similarity">
    <text evidence="1">Belongs to the class-II aminoacyl-tRNA synthetase family.</text>
</comment>
<sequence length="424" mass="47664">MARKIQAIRGMNDILPDQSSVWLYLEKTVADVVKSYGYQQIRFPIVENTDLFKRGVGETTDIVEKEMYTFDDRNGESLTLRPEGTASCVRAADQAGLLFNQTQRLWYTGPMFRYERPQKGRYRQFHQIGVESFGMATADIDAELIILSARLWQKLGLLEHVELQLNTIGLASEREAYKAALVEYLTEFKDQLDEDSQRRLSTNPLRILDSKDESTQAILKNAPNLEDFIGEESQAHFDLLQAILKANGIPYVINRRLVRGLDYYGKTVFEWVTTHLGSQATVCAGGRYDGLVEQLGGKSTPAVGFAMGIERLVLLLETLNLIPDAAKFSTDVFVISMGDDAELASFVLAERLREENSNLVVLRHCGGGNFKNQMKKADRSEARFTIVLGQDEIDKGICQLKDMSTGEQQPHSIDDVATYINAKL</sequence>